<proteinExistence type="inferred from homology"/>
<accession>B3ET95</accession>
<feature type="chain" id="PRO_1000116467" description="UDP-N-acetylglucosamine--N-acetylmuramyl-(pentapeptide) pyrophosphoryl-undecaprenol N-acetylglucosamine transferase">
    <location>
        <begin position="1"/>
        <end position="364"/>
    </location>
</feature>
<feature type="binding site" evidence="1">
    <location>
        <begin position="10"/>
        <end position="12"/>
    </location>
    <ligand>
        <name>UDP-N-acetyl-alpha-D-glucosamine</name>
        <dbReference type="ChEBI" id="CHEBI:57705"/>
    </ligand>
</feature>
<feature type="binding site" evidence="1">
    <location>
        <position position="126"/>
    </location>
    <ligand>
        <name>UDP-N-acetyl-alpha-D-glucosamine</name>
        <dbReference type="ChEBI" id="CHEBI:57705"/>
    </ligand>
</feature>
<feature type="binding site" evidence="1">
    <location>
        <position position="167"/>
    </location>
    <ligand>
        <name>UDP-N-acetyl-alpha-D-glucosamine</name>
        <dbReference type="ChEBI" id="CHEBI:57705"/>
    </ligand>
</feature>
<feature type="binding site" evidence="1">
    <location>
        <position position="199"/>
    </location>
    <ligand>
        <name>UDP-N-acetyl-alpha-D-glucosamine</name>
        <dbReference type="ChEBI" id="CHEBI:57705"/>
    </ligand>
</feature>
<feature type="binding site" evidence="1">
    <location>
        <position position="253"/>
    </location>
    <ligand>
        <name>UDP-N-acetyl-alpha-D-glucosamine</name>
        <dbReference type="ChEBI" id="CHEBI:57705"/>
    </ligand>
</feature>
<feature type="binding site" evidence="1">
    <location>
        <position position="298"/>
    </location>
    <ligand>
        <name>UDP-N-acetyl-alpha-D-glucosamine</name>
        <dbReference type="ChEBI" id="CHEBI:57705"/>
    </ligand>
</feature>
<keyword id="KW-0131">Cell cycle</keyword>
<keyword id="KW-0132">Cell division</keyword>
<keyword id="KW-0997">Cell inner membrane</keyword>
<keyword id="KW-1003">Cell membrane</keyword>
<keyword id="KW-0133">Cell shape</keyword>
<keyword id="KW-0961">Cell wall biogenesis/degradation</keyword>
<keyword id="KW-0328">Glycosyltransferase</keyword>
<keyword id="KW-0472">Membrane</keyword>
<keyword id="KW-0573">Peptidoglycan synthesis</keyword>
<keyword id="KW-1185">Reference proteome</keyword>
<keyword id="KW-0808">Transferase</keyword>
<organism>
    <name type="scientific">Amoebophilus asiaticus (strain 5a2)</name>
    <dbReference type="NCBI Taxonomy" id="452471"/>
    <lineage>
        <taxon>Bacteria</taxon>
        <taxon>Pseudomonadati</taxon>
        <taxon>Bacteroidota</taxon>
        <taxon>Cytophagia</taxon>
        <taxon>Cytophagales</taxon>
        <taxon>Amoebophilaceae</taxon>
        <taxon>Candidatus Amoebophilus</taxon>
    </lineage>
</organism>
<comment type="function">
    <text evidence="1">Cell wall formation. Catalyzes the transfer of a GlcNAc subunit on undecaprenyl-pyrophosphoryl-MurNAc-pentapeptide (lipid intermediate I) to form undecaprenyl-pyrophosphoryl-MurNAc-(pentapeptide)GlcNAc (lipid intermediate II).</text>
</comment>
<comment type="catalytic activity">
    <reaction evidence="1">
        <text>di-trans,octa-cis-undecaprenyl diphospho-N-acetyl-alpha-D-muramoyl-L-alanyl-D-glutamyl-meso-2,6-diaminopimeloyl-D-alanyl-D-alanine + UDP-N-acetyl-alpha-D-glucosamine = di-trans,octa-cis-undecaprenyl diphospho-[N-acetyl-alpha-D-glucosaminyl-(1-&gt;4)]-N-acetyl-alpha-D-muramoyl-L-alanyl-D-glutamyl-meso-2,6-diaminopimeloyl-D-alanyl-D-alanine + UDP + H(+)</text>
        <dbReference type="Rhea" id="RHEA:31227"/>
        <dbReference type="ChEBI" id="CHEBI:15378"/>
        <dbReference type="ChEBI" id="CHEBI:57705"/>
        <dbReference type="ChEBI" id="CHEBI:58223"/>
        <dbReference type="ChEBI" id="CHEBI:61387"/>
        <dbReference type="ChEBI" id="CHEBI:61388"/>
        <dbReference type="EC" id="2.4.1.227"/>
    </reaction>
</comment>
<comment type="pathway">
    <text evidence="1">Cell wall biogenesis; peptidoglycan biosynthesis.</text>
</comment>
<comment type="subcellular location">
    <subcellularLocation>
        <location evidence="1">Cell inner membrane</location>
        <topology evidence="1">Peripheral membrane protein</topology>
        <orientation evidence="1">Cytoplasmic side</orientation>
    </subcellularLocation>
</comment>
<comment type="similarity">
    <text evidence="1">Belongs to the glycosyltransferase 28 family. MurG subfamily.</text>
</comment>
<sequence>MKVIISGGGTGGHVYPGIAIADVLKQKNAENQILFVGAGGKMEMSQVPAAGYPIVGLPIRGINRKLKYIWKNLALPIWVLISLWKVKRIIKDFKPNVVIGTGGYAGFPTIYMAARMHIPIVLQEQNAYAGVANRLLAKYAHKICVAYEGMDAYFPSNKVVLTGNPVRAFLTDKADNYLPSLQYFGLEPGIITVLVLGGSLGAQAISESIIKAAHIFEKHTIQVILSTGNAYFSTIQQADFPAFNKNFKILPYIERMDLAFAAANIVVSRAGAISIAEIASAQKPAIFIPSPNVTADHQMKNVLPLVTKNAAILIKDNEVPDKLVPAILELAKDKQRQRMLVENLSSCFKTHAAESIASLIEDLV</sequence>
<reference key="1">
    <citation type="journal article" date="2010" name="J. Bacteriol.">
        <title>The genome of the amoeba symbiont 'Candidatus Amoebophilus asiaticus' reveals common mechanisms for host cell interaction among amoeba-associated bacteria.</title>
        <authorList>
            <person name="Schmitz-Esser S."/>
            <person name="Tischler P."/>
            <person name="Arnold R."/>
            <person name="Montanaro J."/>
            <person name="Wagner M."/>
            <person name="Rattei T."/>
            <person name="Horn M."/>
        </authorList>
    </citation>
    <scope>NUCLEOTIDE SEQUENCE [LARGE SCALE GENOMIC DNA]</scope>
    <source>
        <strain>5a2</strain>
    </source>
</reference>
<gene>
    <name evidence="1" type="primary">murG</name>
    <name type="ordered locus">Aasi_1104</name>
</gene>
<dbReference type="EC" id="2.4.1.227" evidence="1"/>
<dbReference type="EMBL" id="CP001102">
    <property type="protein sequence ID" value="ACE06447.1"/>
    <property type="molecule type" value="Genomic_DNA"/>
</dbReference>
<dbReference type="RefSeq" id="WP_012473205.1">
    <property type="nucleotide sequence ID" value="NC_010830.1"/>
</dbReference>
<dbReference type="SMR" id="B3ET95"/>
<dbReference type="STRING" id="452471.Aasi_1104"/>
<dbReference type="CAZy" id="GT28">
    <property type="family name" value="Glycosyltransferase Family 28"/>
</dbReference>
<dbReference type="KEGG" id="aas:Aasi_1104"/>
<dbReference type="eggNOG" id="COG0707">
    <property type="taxonomic scope" value="Bacteria"/>
</dbReference>
<dbReference type="HOGENOM" id="CLU_037404_0_1_10"/>
<dbReference type="OrthoDB" id="9808936at2"/>
<dbReference type="UniPathway" id="UPA00219"/>
<dbReference type="Proteomes" id="UP000001227">
    <property type="component" value="Chromosome"/>
</dbReference>
<dbReference type="GO" id="GO:0005886">
    <property type="term" value="C:plasma membrane"/>
    <property type="evidence" value="ECO:0007669"/>
    <property type="project" value="UniProtKB-SubCell"/>
</dbReference>
<dbReference type="GO" id="GO:0051991">
    <property type="term" value="F:UDP-N-acetyl-D-glucosamine:N-acetylmuramoyl-L-alanyl-D-glutamyl-meso-2,6-diaminopimelyl-D-alanyl-D-alanine-diphosphoundecaprenol 4-beta-N-acetylglucosaminlytransferase activity"/>
    <property type="evidence" value="ECO:0007669"/>
    <property type="project" value="RHEA"/>
</dbReference>
<dbReference type="GO" id="GO:0050511">
    <property type="term" value="F:undecaprenyldiphospho-muramoylpentapeptide beta-N-acetylglucosaminyltransferase activity"/>
    <property type="evidence" value="ECO:0007669"/>
    <property type="project" value="UniProtKB-UniRule"/>
</dbReference>
<dbReference type="GO" id="GO:0005975">
    <property type="term" value="P:carbohydrate metabolic process"/>
    <property type="evidence" value="ECO:0007669"/>
    <property type="project" value="InterPro"/>
</dbReference>
<dbReference type="GO" id="GO:0051301">
    <property type="term" value="P:cell division"/>
    <property type="evidence" value="ECO:0007669"/>
    <property type="project" value="UniProtKB-KW"/>
</dbReference>
<dbReference type="GO" id="GO:0071555">
    <property type="term" value="P:cell wall organization"/>
    <property type="evidence" value="ECO:0007669"/>
    <property type="project" value="UniProtKB-KW"/>
</dbReference>
<dbReference type="GO" id="GO:0030259">
    <property type="term" value="P:lipid glycosylation"/>
    <property type="evidence" value="ECO:0007669"/>
    <property type="project" value="UniProtKB-UniRule"/>
</dbReference>
<dbReference type="GO" id="GO:0009252">
    <property type="term" value="P:peptidoglycan biosynthetic process"/>
    <property type="evidence" value="ECO:0007669"/>
    <property type="project" value="UniProtKB-UniRule"/>
</dbReference>
<dbReference type="GO" id="GO:0008360">
    <property type="term" value="P:regulation of cell shape"/>
    <property type="evidence" value="ECO:0007669"/>
    <property type="project" value="UniProtKB-KW"/>
</dbReference>
<dbReference type="CDD" id="cd03785">
    <property type="entry name" value="GT28_MurG"/>
    <property type="match status" value="1"/>
</dbReference>
<dbReference type="Gene3D" id="3.40.50.2000">
    <property type="entry name" value="Glycogen Phosphorylase B"/>
    <property type="match status" value="2"/>
</dbReference>
<dbReference type="HAMAP" id="MF_00033">
    <property type="entry name" value="MurG"/>
    <property type="match status" value="1"/>
</dbReference>
<dbReference type="InterPro" id="IPR006009">
    <property type="entry name" value="GlcNAc_MurG"/>
</dbReference>
<dbReference type="InterPro" id="IPR007235">
    <property type="entry name" value="Glyco_trans_28_C"/>
</dbReference>
<dbReference type="InterPro" id="IPR004276">
    <property type="entry name" value="GlycoTrans_28_N"/>
</dbReference>
<dbReference type="NCBIfam" id="TIGR01133">
    <property type="entry name" value="murG"/>
    <property type="match status" value="1"/>
</dbReference>
<dbReference type="PANTHER" id="PTHR21015:SF22">
    <property type="entry name" value="GLYCOSYLTRANSFERASE"/>
    <property type="match status" value="1"/>
</dbReference>
<dbReference type="PANTHER" id="PTHR21015">
    <property type="entry name" value="UDP-N-ACETYLGLUCOSAMINE--N-ACETYLMURAMYL-(PENTAPEPTIDE) PYROPHOSPHORYL-UNDECAPRENOL N-ACETYLGLUCOSAMINE TRANSFERASE 1"/>
    <property type="match status" value="1"/>
</dbReference>
<dbReference type="Pfam" id="PF04101">
    <property type="entry name" value="Glyco_tran_28_C"/>
    <property type="match status" value="1"/>
</dbReference>
<dbReference type="Pfam" id="PF03033">
    <property type="entry name" value="Glyco_transf_28"/>
    <property type="match status" value="1"/>
</dbReference>
<dbReference type="SUPFAM" id="SSF53756">
    <property type="entry name" value="UDP-Glycosyltransferase/glycogen phosphorylase"/>
    <property type="match status" value="1"/>
</dbReference>
<protein>
    <recommendedName>
        <fullName evidence="1">UDP-N-acetylglucosamine--N-acetylmuramyl-(pentapeptide) pyrophosphoryl-undecaprenol N-acetylglucosamine transferase</fullName>
        <ecNumber evidence="1">2.4.1.227</ecNumber>
    </recommendedName>
    <alternativeName>
        <fullName evidence="1">Undecaprenyl-PP-MurNAc-pentapeptide-UDPGlcNAc GlcNAc transferase</fullName>
    </alternativeName>
</protein>
<evidence type="ECO:0000255" key="1">
    <source>
        <dbReference type="HAMAP-Rule" id="MF_00033"/>
    </source>
</evidence>
<name>MURG_AMOA5</name>